<evidence type="ECO:0000255" key="1">
    <source>
        <dbReference type="PROSITE-ProRule" id="PRU00705"/>
    </source>
</evidence>
<evidence type="ECO:0000303" key="2">
    <source>
    </source>
</evidence>
<evidence type="ECO:0000305" key="3"/>
<feature type="chain" id="PRO_0000220417" description="High-potential iron-sulfur protein isozyme 2">
    <location>
        <begin position="1"/>
        <end position="76"/>
    </location>
</feature>
<feature type="binding site">
    <location>
        <position position="38"/>
    </location>
    <ligand>
        <name>[4Fe-4S] cluster</name>
        <dbReference type="ChEBI" id="CHEBI:49883"/>
    </ligand>
</feature>
<feature type="binding site">
    <location>
        <position position="41"/>
    </location>
    <ligand>
        <name>[4Fe-4S] cluster</name>
        <dbReference type="ChEBI" id="CHEBI:49883"/>
    </ligand>
</feature>
<feature type="binding site">
    <location>
        <position position="54"/>
    </location>
    <ligand>
        <name>[4Fe-4S] cluster</name>
        <dbReference type="ChEBI" id="CHEBI:49883"/>
    </ligand>
</feature>
<feature type="binding site">
    <location>
        <position position="70"/>
    </location>
    <ligand>
        <name>[4Fe-4S] cluster</name>
        <dbReference type="ChEBI" id="CHEBI:49883"/>
    </ligand>
</feature>
<protein>
    <recommendedName>
        <fullName evidence="2">High-potential iron-sulfur protein isozyme 2</fullName>
        <shortName evidence="2">HiPIP 2</shortName>
    </recommendedName>
    <alternativeName>
        <fullName evidence="3">High-redox-potential ferredoxin 2</fullName>
    </alternativeName>
</protein>
<sequence>GLPDGVEDLPKAEDDHAHDYVNDAADTDHARFQEGQLCENCQFWVDYVNGWGYCQHPDFTDVLVRGEGWCSVYAPA</sequence>
<reference key="1">
    <citation type="journal article" date="1985" name="Arch. Biochem. Biophys.">
        <title>Amino acid sequence of high-redox-potential ferredoxin (HiPIP) isozymes from the extremely halophilic purple phototrophic bacterium, Ectothiorhodospira halophila.</title>
        <authorList>
            <person name="Tedro S.M."/>
            <person name="Meyer T.E."/>
            <person name="Kamen M.D."/>
        </authorList>
    </citation>
    <scope>PROTEIN SEQUENCE</scope>
</reference>
<comment type="function">
    <text>Specific class of high-redox-potential 4Fe-4S ferredoxins. Functions in anaerobic electron transport in most purple and in some other photosynthetic bacteria and in at least one genus (Paracoccus) of halophilic, denitrifying bacteria.</text>
</comment>
<comment type="biophysicochemical properties">
    <redoxPotential>
        <text>E(0) is +50 mV.</text>
    </redoxPotential>
</comment>
<comment type="subunit">
    <text evidence="3">Homodimer.</text>
</comment>
<comment type="miscellaneous">
    <text>In E.halophila, two HiPIP isozymes are found.</text>
</comment>
<comment type="similarity">
    <text evidence="1">Belongs to the high-potential iron-sulfur protein (HiPIP) family.</text>
</comment>
<accession>P04169</accession>
<proteinExistence type="evidence at protein level"/>
<gene>
    <name type="primary">hip2</name>
</gene>
<organism>
    <name type="scientific">Halorhodospira halophila</name>
    <name type="common">Ectothiorhodospira halophila</name>
    <dbReference type="NCBI Taxonomy" id="1053"/>
    <lineage>
        <taxon>Bacteria</taxon>
        <taxon>Pseudomonadati</taxon>
        <taxon>Pseudomonadota</taxon>
        <taxon>Gammaproteobacteria</taxon>
        <taxon>Chromatiales</taxon>
        <taxon>Ectothiorhodospiraceae</taxon>
        <taxon>Halorhodospira</taxon>
    </lineage>
</organism>
<keyword id="KW-0004">4Fe-4S</keyword>
<keyword id="KW-0903">Direct protein sequencing</keyword>
<keyword id="KW-0249">Electron transport</keyword>
<keyword id="KW-0408">Iron</keyword>
<keyword id="KW-0411">Iron-sulfur</keyword>
<keyword id="KW-0479">Metal-binding</keyword>
<keyword id="KW-0813">Transport</keyword>
<name>HIP2_HALHA</name>
<dbReference type="PIR" id="A00271">
    <property type="entry name" value="IHER2"/>
</dbReference>
<dbReference type="SMR" id="P04169"/>
<dbReference type="GO" id="GO:0051539">
    <property type="term" value="F:4 iron, 4 sulfur cluster binding"/>
    <property type="evidence" value="ECO:0007669"/>
    <property type="project" value="UniProtKB-KW"/>
</dbReference>
<dbReference type="GO" id="GO:0009055">
    <property type="term" value="F:electron transfer activity"/>
    <property type="evidence" value="ECO:0007669"/>
    <property type="project" value="InterPro"/>
</dbReference>
<dbReference type="GO" id="GO:0046872">
    <property type="term" value="F:metal ion binding"/>
    <property type="evidence" value="ECO:0007669"/>
    <property type="project" value="UniProtKB-KW"/>
</dbReference>
<dbReference type="GO" id="GO:0019646">
    <property type="term" value="P:aerobic electron transport chain"/>
    <property type="evidence" value="ECO:0007669"/>
    <property type="project" value="InterPro"/>
</dbReference>
<dbReference type="Gene3D" id="4.10.490.10">
    <property type="entry name" value="High potential iron-sulphur protein"/>
    <property type="match status" value="1"/>
</dbReference>
<dbReference type="InterPro" id="IPR000170">
    <property type="entry name" value="High_potential_FeS_prot"/>
</dbReference>
<dbReference type="InterPro" id="IPR036369">
    <property type="entry name" value="HIPIP_sf"/>
</dbReference>
<dbReference type="Pfam" id="PF01355">
    <property type="entry name" value="HIPIP"/>
    <property type="match status" value="1"/>
</dbReference>
<dbReference type="SUPFAM" id="SSF57652">
    <property type="entry name" value="HIPIP (high potential iron protein)"/>
    <property type="match status" value="1"/>
</dbReference>
<dbReference type="PROSITE" id="PS51373">
    <property type="entry name" value="HIPIP"/>
    <property type="match status" value="1"/>
</dbReference>